<gene>
    <name type="primary">BTBD9</name>
    <name type="synonym">KIAA1880</name>
</gene>
<reference key="1">
    <citation type="journal article" date="2001" name="DNA Res.">
        <title>Prediction of the coding sequences of unidentified human genes. XXI. The complete sequences of 60 new cDNA clones from brain which code for large proteins.</title>
        <authorList>
            <person name="Nagase T."/>
            <person name="Kikuno R."/>
            <person name="Ohara O."/>
        </authorList>
    </citation>
    <scope>NUCLEOTIDE SEQUENCE [LARGE SCALE MRNA] (ISOFORM 1)</scope>
    <scope>TISSUE SPECIFICITY</scope>
    <source>
        <tissue>Brain</tissue>
    </source>
</reference>
<reference key="2">
    <citation type="journal article" date="2003" name="Nature">
        <title>The DNA sequence and analysis of human chromosome 6.</title>
        <authorList>
            <person name="Mungall A.J."/>
            <person name="Palmer S.A."/>
            <person name="Sims S.K."/>
            <person name="Edwards C.A."/>
            <person name="Ashurst J.L."/>
            <person name="Wilming L."/>
            <person name="Jones M.C."/>
            <person name="Horton R."/>
            <person name="Hunt S.E."/>
            <person name="Scott C.E."/>
            <person name="Gilbert J.G.R."/>
            <person name="Clamp M.E."/>
            <person name="Bethel G."/>
            <person name="Milne S."/>
            <person name="Ainscough R."/>
            <person name="Almeida J.P."/>
            <person name="Ambrose K.D."/>
            <person name="Andrews T.D."/>
            <person name="Ashwell R.I.S."/>
            <person name="Babbage A.K."/>
            <person name="Bagguley C.L."/>
            <person name="Bailey J."/>
            <person name="Banerjee R."/>
            <person name="Barker D.J."/>
            <person name="Barlow K.F."/>
            <person name="Bates K."/>
            <person name="Beare D.M."/>
            <person name="Beasley H."/>
            <person name="Beasley O."/>
            <person name="Bird C.P."/>
            <person name="Blakey S.E."/>
            <person name="Bray-Allen S."/>
            <person name="Brook J."/>
            <person name="Brown A.J."/>
            <person name="Brown J.Y."/>
            <person name="Burford D.C."/>
            <person name="Burrill W."/>
            <person name="Burton J."/>
            <person name="Carder C."/>
            <person name="Carter N.P."/>
            <person name="Chapman J.C."/>
            <person name="Clark S.Y."/>
            <person name="Clark G."/>
            <person name="Clee C.M."/>
            <person name="Clegg S."/>
            <person name="Cobley V."/>
            <person name="Collier R.E."/>
            <person name="Collins J.E."/>
            <person name="Colman L.K."/>
            <person name="Corby N.R."/>
            <person name="Coville G.J."/>
            <person name="Culley K.M."/>
            <person name="Dhami P."/>
            <person name="Davies J."/>
            <person name="Dunn M."/>
            <person name="Earthrowl M.E."/>
            <person name="Ellington A.E."/>
            <person name="Evans K.A."/>
            <person name="Faulkner L."/>
            <person name="Francis M.D."/>
            <person name="Frankish A."/>
            <person name="Frankland J."/>
            <person name="French L."/>
            <person name="Garner P."/>
            <person name="Garnett J."/>
            <person name="Ghori M.J."/>
            <person name="Gilby L.M."/>
            <person name="Gillson C.J."/>
            <person name="Glithero R.J."/>
            <person name="Grafham D.V."/>
            <person name="Grant M."/>
            <person name="Gribble S."/>
            <person name="Griffiths C."/>
            <person name="Griffiths M.N.D."/>
            <person name="Hall R."/>
            <person name="Halls K.S."/>
            <person name="Hammond S."/>
            <person name="Harley J.L."/>
            <person name="Hart E.A."/>
            <person name="Heath P.D."/>
            <person name="Heathcott R."/>
            <person name="Holmes S.J."/>
            <person name="Howden P.J."/>
            <person name="Howe K.L."/>
            <person name="Howell G.R."/>
            <person name="Huckle E."/>
            <person name="Humphray S.J."/>
            <person name="Humphries M.D."/>
            <person name="Hunt A.R."/>
            <person name="Johnson C.M."/>
            <person name="Joy A.A."/>
            <person name="Kay M."/>
            <person name="Keenan S.J."/>
            <person name="Kimberley A.M."/>
            <person name="King A."/>
            <person name="Laird G.K."/>
            <person name="Langford C."/>
            <person name="Lawlor S."/>
            <person name="Leongamornlert D.A."/>
            <person name="Leversha M."/>
            <person name="Lloyd C.R."/>
            <person name="Lloyd D.M."/>
            <person name="Loveland J.E."/>
            <person name="Lovell J."/>
            <person name="Martin S."/>
            <person name="Mashreghi-Mohammadi M."/>
            <person name="Maslen G.L."/>
            <person name="Matthews L."/>
            <person name="McCann O.T."/>
            <person name="McLaren S.J."/>
            <person name="McLay K."/>
            <person name="McMurray A."/>
            <person name="Moore M.J.F."/>
            <person name="Mullikin J.C."/>
            <person name="Niblett D."/>
            <person name="Nickerson T."/>
            <person name="Novik K.L."/>
            <person name="Oliver K."/>
            <person name="Overton-Larty E.K."/>
            <person name="Parker A."/>
            <person name="Patel R."/>
            <person name="Pearce A.V."/>
            <person name="Peck A.I."/>
            <person name="Phillimore B.J.C.T."/>
            <person name="Phillips S."/>
            <person name="Plumb R.W."/>
            <person name="Porter K.M."/>
            <person name="Ramsey Y."/>
            <person name="Ranby S.A."/>
            <person name="Rice C.M."/>
            <person name="Ross M.T."/>
            <person name="Searle S.M."/>
            <person name="Sehra H.K."/>
            <person name="Sheridan E."/>
            <person name="Skuce C.D."/>
            <person name="Smith S."/>
            <person name="Smith M."/>
            <person name="Spraggon L."/>
            <person name="Squares S.L."/>
            <person name="Steward C.A."/>
            <person name="Sycamore N."/>
            <person name="Tamlyn-Hall G."/>
            <person name="Tester J."/>
            <person name="Theaker A.J."/>
            <person name="Thomas D.W."/>
            <person name="Thorpe A."/>
            <person name="Tracey A."/>
            <person name="Tromans A."/>
            <person name="Tubby B."/>
            <person name="Wall M."/>
            <person name="Wallis J.M."/>
            <person name="West A.P."/>
            <person name="White S.S."/>
            <person name="Whitehead S.L."/>
            <person name="Whittaker H."/>
            <person name="Wild A."/>
            <person name="Willey D.J."/>
            <person name="Wilmer T.E."/>
            <person name="Wood J.M."/>
            <person name="Wray P.W."/>
            <person name="Wyatt J.C."/>
            <person name="Young L."/>
            <person name="Younger R.M."/>
            <person name="Bentley D.R."/>
            <person name="Coulson A."/>
            <person name="Durbin R.M."/>
            <person name="Hubbard T."/>
            <person name="Sulston J.E."/>
            <person name="Dunham I."/>
            <person name="Rogers J."/>
            <person name="Beck S."/>
        </authorList>
    </citation>
    <scope>NUCLEOTIDE SEQUENCE [LARGE SCALE GENOMIC DNA]</scope>
</reference>
<reference key="3">
    <citation type="submission" date="2005-07" db="EMBL/GenBank/DDBJ databases">
        <authorList>
            <person name="Mural R.J."/>
            <person name="Istrail S."/>
            <person name="Sutton G."/>
            <person name="Florea L."/>
            <person name="Halpern A.L."/>
            <person name="Mobarry C.M."/>
            <person name="Lippert R."/>
            <person name="Walenz B."/>
            <person name="Shatkay H."/>
            <person name="Dew I."/>
            <person name="Miller J.R."/>
            <person name="Flanigan M.J."/>
            <person name="Edwards N.J."/>
            <person name="Bolanos R."/>
            <person name="Fasulo D."/>
            <person name="Halldorsson B.V."/>
            <person name="Hannenhalli S."/>
            <person name="Turner R."/>
            <person name="Yooseph S."/>
            <person name="Lu F."/>
            <person name="Nusskern D.R."/>
            <person name="Shue B.C."/>
            <person name="Zheng X.H."/>
            <person name="Zhong F."/>
            <person name="Delcher A.L."/>
            <person name="Huson D.H."/>
            <person name="Kravitz S.A."/>
            <person name="Mouchard L."/>
            <person name="Reinert K."/>
            <person name="Remington K.A."/>
            <person name="Clark A.G."/>
            <person name="Waterman M.S."/>
            <person name="Eichler E.E."/>
            <person name="Adams M.D."/>
            <person name="Hunkapiller M.W."/>
            <person name="Myers E.W."/>
            <person name="Venter J.C."/>
        </authorList>
    </citation>
    <scope>NUCLEOTIDE SEQUENCE [LARGE SCALE GENOMIC DNA]</scope>
</reference>
<reference key="4">
    <citation type="journal article" date="2004" name="Genome Res.">
        <title>The status, quality, and expansion of the NIH full-length cDNA project: the Mammalian Gene Collection (MGC).</title>
        <authorList>
            <consortium name="The MGC Project Team"/>
        </authorList>
    </citation>
    <scope>NUCLEOTIDE SEQUENCE [LARGE SCALE MRNA] (ISOFORMS 2 AND 3)</scope>
</reference>
<reference key="5">
    <citation type="journal article" date="2004" name="Nat. Genet.">
        <title>Complete sequencing and characterization of 21,243 full-length human cDNAs.</title>
        <authorList>
            <person name="Ota T."/>
            <person name="Suzuki Y."/>
            <person name="Nishikawa T."/>
            <person name="Otsuki T."/>
            <person name="Sugiyama T."/>
            <person name="Irie R."/>
            <person name="Wakamatsu A."/>
            <person name="Hayashi K."/>
            <person name="Sato H."/>
            <person name="Nagai K."/>
            <person name="Kimura K."/>
            <person name="Makita H."/>
            <person name="Sekine M."/>
            <person name="Obayashi M."/>
            <person name="Nishi T."/>
            <person name="Shibahara T."/>
            <person name="Tanaka T."/>
            <person name="Ishii S."/>
            <person name="Yamamoto J."/>
            <person name="Saito K."/>
            <person name="Kawai Y."/>
            <person name="Isono Y."/>
            <person name="Nakamura Y."/>
            <person name="Nagahari K."/>
            <person name="Murakami K."/>
            <person name="Yasuda T."/>
            <person name="Iwayanagi T."/>
            <person name="Wagatsuma M."/>
            <person name="Shiratori A."/>
            <person name="Sudo H."/>
            <person name="Hosoiri T."/>
            <person name="Kaku Y."/>
            <person name="Kodaira H."/>
            <person name="Kondo H."/>
            <person name="Sugawara M."/>
            <person name="Takahashi M."/>
            <person name="Kanda K."/>
            <person name="Yokoi T."/>
            <person name="Furuya T."/>
            <person name="Kikkawa E."/>
            <person name="Omura Y."/>
            <person name="Abe K."/>
            <person name="Kamihara K."/>
            <person name="Katsuta N."/>
            <person name="Sato K."/>
            <person name="Tanikawa M."/>
            <person name="Yamazaki M."/>
            <person name="Ninomiya K."/>
            <person name="Ishibashi T."/>
            <person name="Yamashita H."/>
            <person name="Murakawa K."/>
            <person name="Fujimori K."/>
            <person name="Tanai H."/>
            <person name="Kimata M."/>
            <person name="Watanabe M."/>
            <person name="Hiraoka S."/>
            <person name="Chiba Y."/>
            <person name="Ishida S."/>
            <person name="Ono Y."/>
            <person name="Takiguchi S."/>
            <person name="Watanabe S."/>
            <person name="Yosida M."/>
            <person name="Hotuta T."/>
            <person name="Kusano J."/>
            <person name="Kanehori K."/>
            <person name="Takahashi-Fujii A."/>
            <person name="Hara H."/>
            <person name="Tanase T.-O."/>
            <person name="Nomura Y."/>
            <person name="Togiya S."/>
            <person name="Komai F."/>
            <person name="Hara R."/>
            <person name="Takeuchi K."/>
            <person name="Arita M."/>
            <person name="Imose N."/>
            <person name="Musashino K."/>
            <person name="Yuuki H."/>
            <person name="Oshima A."/>
            <person name="Sasaki N."/>
            <person name="Aotsuka S."/>
            <person name="Yoshikawa Y."/>
            <person name="Matsunawa H."/>
            <person name="Ichihara T."/>
            <person name="Shiohata N."/>
            <person name="Sano S."/>
            <person name="Moriya S."/>
            <person name="Momiyama H."/>
            <person name="Satoh N."/>
            <person name="Takami S."/>
            <person name="Terashima Y."/>
            <person name="Suzuki O."/>
            <person name="Nakagawa S."/>
            <person name="Senoh A."/>
            <person name="Mizoguchi H."/>
            <person name="Goto Y."/>
            <person name="Shimizu F."/>
            <person name="Wakebe H."/>
            <person name="Hishigaki H."/>
            <person name="Watanabe T."/>
            <person name="Sugiyama A."/>
            <person name="Takemoto M."/>
            <person name="Kawakami B."/>
            <person name="Yamazaki M."/>
            <person name="Watanabe K."/>
            <person name="Kumagai A."/>
            <person name="Itakura S."/>
            <person name="Fukuzumi Y."/>
            <person name="Fujimori Y."/>
            <person name="Komiyama M."/>
            <person name="Tashiro H."/>
            <person name="Tanigami A."/>
            <person name="Fujiwara T."/>
            <person name="Ono T."/>
            <person name="Yamada K."/>
            <person name="Fujii Y."/>
            <person name="Ozaki K."/>
            <person name="Hirao M."/>
            <person name="Ohmori Y."/>
            <person name="Kawabata A."/>
            <person name="Hikiji T."/>
            <person name="Kobatake N."/>
            <person name="Inagaki H."/>
            <person name="Ikema Y."/>
            <person name="Okamoto S."/>
            <person name="Okitani R."/>
            <person name="Kawakami T."/>
            <person name="Noguchi S."/>
            <person name="Itoh T."/>
            <person name="Shigeta K."/>
            <person name="Senba T."/>
            <person name="Matsumura K."/>
            <person name="Nakajima Y."/>
            <person name="Mizuno T."/>
            <person name="Morinaga M."/>
            <person name="Sasaki M."/>
            <person name="Togashi T."/>
            <person name="Oyama M."/>
            <person name="Hata H."/>
            <person name="Watanabe M."/>
            <person name="Komatsu T."/>
            <person name="Mizushima-Sugano J."/>
            <person name="Satoh T."/>
            <person name="Shirai Y."/>
            <person name="Takahashi Y."/>
            <person name="Nakagawa K."/>
            <person name="Okumura K."/>
            <person name="Nagase T."/>
            <person name="Nomura N."/>
            <person name="Kikuchi H."/>
            <person name="Masuho Y."/>
            <person name="Yamashita R."/>
            <person name="Nakai K."/>
            <person name="Yada T."/>
            <person name="Nakamura Y."/>
            <person name="Ohara O."/>
            <person name="Isogai T."/>
            <person name="Sugano S."/>
        </authorList>
    </citation>
    <scope>NUCLEOTIDE SEQUENCE [LARGE SCALE MRNA] OF 69-612 (ISOFORM 1)</scope>
    <source>
        <tissue>Testis</tissue>
    </source>
</reference>
<reference key="6">
    <citation type="journal article" date="2007" name="N. Engl. J. Med.">
        <title>A genetic risk factor for periodic limb movements in sleep.</title>
        <authorList>
            <person name="Stefansson H."/>
            <person name="Rye D.B."/>
            <person name="Hicks A."/>
            <person name="Petursson H."/>
            <person name="Ingason A."/>
            <person name="Thorgeirsson T.E."/>
            <person name="Palsson S."/>
            <person name="Sigmundsson T."/>
            <person name="Sigurdsson A.P."/>
            <person name="Eiriksdottir I."/>
            <person name="Soebech E."/>
            <person name="Bliwise D."/>
            <person name="Beck J.M."/>
            <person name="Rosen A."/>
            <person name="Waddy S."/>
            <person name="Trotti L.M."/>
            <person name="Iranzo A."/>
            <person name="Thambisetty M."/>
            <person name="Hardarson G.A."/>
            <person name="Kristjansson K."/>
            <person name="Gudmundsson L.J."/>
            <person name="Thorsteinsdottir U."/>
            <person name="Kong A."/>
            <person name="Gulcher J.R."/>
            <person name="Gudbjartsson D."/>
            <person name="Stefansson K."/>
        </authorList>
    </citation>
    <scope>POSSIBLE INVOLVEMENT IN RLS6</scope>
</reference>
<reference key="7">
    <citation type="journal article" date="2008" name="N. Engl. J. Med.">
        <title>A genetic risk factor for periodic limb movements in sleep.</title>
        <authorList>
            <person name="Vilarino-Guell C."/>
            <person name="Farrer M.J."/>
            <person name="Lin S.C."/>
        </authorList>
    </citation>
    <scope>POSSIBLE INVOLVEMENT IN RLS6</scope>
</reference>
<reference key="8">
    <citation type="journal article" date="2012" name="Curr. Biol.">
        <title>Sleep fragmentation and motor restlessness in a Drosophila model of Restless Legs Syndrome.</title>
        <authorList>
            <person name="Freeman A."/>
            <person name="Pranski E."/>
            <person name="Miller R.D."/>
            <person name="Radmard S."/>
            <person name="Bernhard D."/>
            <person name="Jinnah H.A."/>
            <person name="Betarbet R."/>
            <person name="Rye D.B."/>
            <person name="Sanyal S."/>
        </authorList>
    </citation>
    <scope>TISSUE SPECIFICITY</scope>
</reference>
<proteinExistence type="evidence at protein level"/>
<organism>
    <name type="scientific">Homo sapiens</name>
    <name type="common">Human</name>
    <dbReference type="NCBI Taxonomy" id="9606"/>
    <lineage>
        <taxon>Eukaryota</taxon>
        <taxon>Metazoa</taxon>
        <taxon>Chordata</taxon>
        <taxon>Craniata</taxon>
        <taxon>Vertebrata</taxon>
        <taxon>Euteleostomi</taxon>
        <taxon>Mammalia</taxon>
        <taxon>Eutheria</taxon>
        <taxon>Euarchontoglires</taxon>
        <taxon>Primates</taxon>
        <taxon>Haplorrhini</taxon>
        <taxon>Catarrhini</taxon>
        <taxon>Hominidae</taxon>
        <taxon>Homo</taxon>
    </lineage>
</organism>
<name>BTBD9_HUMAN</name>
<dbReference type="EMBL" id="AB067467">
    <property type="protein sequence ID" value="BAB67773.1"/>
    <property type="status" value="ALT_INIT"/>
    <property type="molecule type" value="mRNA"/>
</dbReference>
<dbReference type="EMBL" id="AL031905">
    <property type="status" value="NOT_ANNOTATED_CDS"/>
    <property type="molecule type" value="Genomic_DNA"/>
</dbReference>
<dbReference type="EMBL" id="AL033518">
    <property type="status" value="NOT_ANNOTATED_CDS"/>
    <property type="molecule type" value="Genomic_DNA"/>
</dbReference>
<dbReference type="EMBL" id="AL079341">
    <property type="status" value="NOT_ANNOTATED_CDS"/>
    <property type="molecule type" value="Genomic_DNA"/>
</dbReference>
<dbReference type="EMBL" id="AL355345">
    <property type="status" value="NOT_ANNOTATED_CDS"/>
    <property type="molecule type" value="Genomic_DNA"/>
</dbReference>
<dbReference type="EMBL" id="AL451162">
    <property type="status" value="NOT_ANNOTATED_CDS"/>
    <property type="molecule type" value="Genomic_DNA"/>
</dbReference>
<dbReference type="EMBL" id="CH471081">
    <property type="protein sequence ID" value="EAX03961.1"/>
    <property type="molecule type" value="Genomic_DNA"/>
</dbReference>
<dbReference type="EMBL" id="BC101354">
    <property type="protein sequence ID" value="AAI01355.1"/>
    <property type="molecule type" value="mRNA"/>
</dbReference>
<dbReference type="EMBL" id="BC101355">
    <property type="protein sequence ID" value="AAI01356.1"/>
    <property type="molecule type" value="mRNA"/>
</dbReference>
<dbReference type="EMBL" id="BC101357">
    <property type="protein sequence ID" value="AAI01358.1"/>
    <property type="molecule type" value="mRNA"/>
</dbReference>
<dbReference type="EMBL" id="AK057507">
    <property type="protein sequence ID" value="BAB71514.1"/>
    <property type="molecule type" value="mRNA"/>
</dbReference>
<dbReference type="CCDS" id="CCDS43458.1">
    <molecule id="Q96Q07-3"/>
</dbReference>
<dbReference type="CCDS" id="CCDS47418.1">
    <molecule id="Q96Q07-1"/>
</dbReference>
<dbReference type="CCDS" id="CCDS54998.1">
    <molecule id="Q96Q07-2"/>
</dbReference>
<dbReference type="RefSeq" id="NP_001092742.1">
    <molecule id="Q96Q07-1"/>
    <property type="nucleotide sequence ID" value="NM_001099272.2"/>
</dbReference>
<dbReference type="RefSeq" id="NP_001165889.1">
    <molecule id="Q96Q07-2"/>
    <property type="nucleotide sequence ID" value="NM_001172418.2"/>
</dbReference>
<dbReference type="RefSeq" id="NP_443125.1">
    <molecule id="Q96Q07-1"/>
    <property type="nucleotide sequence ID" value="NM_052893.2"/>
</dbReference>
<dbReference type="RefSeq" id="NP_689946.2">
    <molecule id="Q96Q07-3"/>
    <property type="nucleotide sequence ID" value="NM_152733.3"/>
</dbReference>
<dbReference type="RefSeq" id="XP_011512581.1">
    <molecule id="Q96Q07-1"/>
    <property type="nucleotide sequence ID" value="XM_011514279.4"/>
</dbReference>
<dbReference type="RefSeq" id="XP_047274102.1">
    <molecule id="Q96Q07-1"/>
    <property type="nucleotide sequence ID" value="XM_047418146.1"/>
</dbReference>
<dbReference type="RefSeq" id="XP_054210128.1">
    <molecule id="Q96Q07-1"/>
    <property type="nucleotide sequence ID" value="XM_054354153.1"/>
</dbReference>
<dbReference type="RefSeq" id="XP_054210129.1">
    <molecule id="Q96Q07-1"/>
    <property type="nucleotide sequence ID" value="XM_054354154.1"/>
</dbReference>
<dbReference type="SMR" id="Q96Q07"/>
<dbReference type="BioGRID" id="125343">
    <property type="interactions" value="57"/>
</dbReference>
<dbReference type="FunCoup" id="Q96Q07">
    <property type="interactions" value="1225"/>
</dbReference>
<dbReference type="IntAct" id="Q96Q07">
    <property type="interactions" value="45"/>
</dbReference>
<dbReference type="MINT" id="Q96Q07"/>
<dbReference type="STRING" id="9606.ENSP00000418751"/>
<dbReference type="iPTMnet" id="Q96Q07"/>
<dbReference type="PhosphoSitePlus" id="Q96Q07"/>
<dbReference type="BioMuta" id="BTBD9"/>
<dbReference type="DMDM" id="34395545"/>
<dbReference type="jPOST" id="Q96Q07"/>
<dbReference type="MassIVE" id="Q96Q07"/>
<dbReference type="PaxDb" id="9606-ENSP00000418751"/>
<dbReference type="PeptideAtlas" id="Q96Q07"/>
<dbReference type="ProteomicsDB" id="61943"/>
<dbReference type="ProteomicsDB" id="77805">
    <molecule id="Q96Q07-1"/>
</dbReference>
<dbReference type="ProteomicsDB" id="77806">
    <molecule id="Q96Q07-2"/>
</dbReference>
<dbReference type="Pumba" id="Q96Q07"/>
<dbReference type="Antibodypedia" id="29854">
    <property type="antibodies" value="128 antibodies from 20 providers"/>
</dbReference>
<dbReference type="DNASU" id="114781"/>
<dbReference type="Ensembl" id="ENST00000314100.10">
    <molecule id="Q96Q07-3"/>
    <property type="protein sequence ID" value="ENSP00000323408.6"/>
    <property type="gene ID" value="ENSG00000183826.19"/>
</dbReference>
<dbReference type="Ensembl" id="ENST00000419706.6">
    <molecule id="Q96Q07-2"/>
    <property type="protein sequence ID" value="ENSP00000415365.2"/>
    <property type="gene ID" value="ENSG00000183826.19"/>
</dbReference>
<dbReference type="Ensembl" id="ENST00000481247.6">
    <molecule id="Q96Q07-1"/>
    <property type="protein sequence ID" value="ENSP00000418751.1"/>
    <property type="gene ID" value="ENSG00000183826.19"/>
</dbReference>
<dbReference type="Ensembl" id="ENST00000649492.1">
    <molecule id="Q96Q07-1"/>
    <property type="protein sequence ID" value="ENSP00000497066.1"/>
    <property type="gene ID" value="ENSG00000183826.19"/>
</dbReference>
<dbReference type="GeneID" id="114781"/>
<dbReference type="KEGG" id="hsa:114781"/>
<dbReference type="MANE-Select" id="ENST00000481247.6">
    <property type="protein sequence ID" value="ENSP00000418751.1"/>
    <property type="RefSeq nucleotide sequence ID" value="NM_001099272.2"/>
    <property type="RefSeq protein sequence ID" value="NP_001092742.1"/>
</dbReference>
<dbReference type="UCSC" id="uc003ony.4">
    <molecule id="Q96Q07-1"/>
    <property type="organism name" value="human"/>
</dbReference>
<dbReference type="AGR" id="HGNC:21228"/>
<dbReference type="CTD" id="114781"/>
<dbReference type="DisGeNET" id="114781"/>
<dbReference type="GeneCards" id="BTBD9"/>
<dbReference type="HGNC" id="HGNC:21228">
    <property type="gene designation" value="BTBD9"/>
</dbReference>
<dbReference type="HPA" id="ENSG00000183826">
    <property type="expression patterns" value="Low tissue specificity"/>
</dbReference>
<dbReference type="MIM" id="611185">
    <property type="type" value="phenotype"/>
</dbReference>
<dbReference type="MIM" id="611237">
    <property type="type" value="gene"/>
</dbReference>
<dbReference type="neXtProt" id="NX_Q96Q07"/>
<dbReference type="OpenTargets" id="ENSG00000183826"/>
<dbReference type="PharmGKB" id="PA134891920"/>
<dbReference type="VEuPathDB" id="HostDB:ENSG00000183826"/>
<dbReference type="eggNOG" id="KOG4350">
    <property type="taxonomic scope" value="Eukaryota"/>
</dbReference>
<dbReference type="GeneTree" id="ENSGT00940000158298"/>
<dbReference type="HOGENOM" id="CLU_004253_0_2_1"/>
<dbReference type="InParanoid" id="Q96Q07"/>
<dbReference type="OMA" id="LCMINHI"/>
<dbReference type="OrthoDB" id="9997739at2759"/>
<dbReference type="PAN-GO" id="Q96Q07">
    <property type="GO annotations" value="4 GO annotations based on evolutionary models"/>
</dbReference>
<dbReference type="PhylomeDB" id="Q96Q07"/>
<dbReference type="TreeFam" id="TF318638"/>
<dbReference type="PathwayCommons" id="Q96Q07"/>
<dbReference type="SignaLink" id="Q96Q07"/>
<dbReference type="BioGRID-ORCS" id="114781">
    <property type="hits" value="167 hits in 1188 CRISPR screens"/>
</dbReference>
<dbReference type="ChiTaRS" id="BTBD9">
    <property type="organism name" value="human"/>
</dbReference>
<dbReference type="GenomeRNAi" id="114781"/>
<dbReference type="Pharos" id="Q96Q07">
    <property type="development level" value="Tbio"/>
</dbReference>
<dbReference type="PRO" id="PR:Q96Q07"/>
<dbReference type="Proteomes" id="UP000005640">
    <property type="component" value="Chromosome 6"/>
</dbReference>
<dbReference type="RNAct" id="Q96Q07">
    <property type="molecule type" value="protein"/>
</dbReference>
<dbReference type="Bgee" id="ENSG00000183826">
    <property type="expression patterns" value="Expressed in endothelial cell and 153 other cell types or tissues"/>
</dbReference>
<dbReference type="ExpressionAtlas" id="Q96Q07">
    <property type="expression patterns" value="baseline and differential"/>
</dbReference>
<dbReference type="GO" id="GO:0005737">
    <property type="term" value="C:cytoplasm"/>
    <property type="evidence" value="ECO:0000318"/>
    <property type="project" value="GO_Central"/>
</dbReference>
<dbReference type="GO" id="GO:0098978">
    <property type="term" value="C:glutamatergic synapse"/>
    <property type="evidence" value="ECO:0007669"/>
    <property type="project" value="Ensembl"/>
</dbReference>
<dbReference type="GO" id="GO:0008344">
    <property type="term" value="P:adult locomotory behavior"/>
    <property type="evidence" value="ECO:0000318"/>
    <property type="project" value="GO_Central"/>
</dbReference>
<dbReference type="GO" id="GO:0048512">
    <property type="term" value="P:circadian behavior"/>
    <property type="evidence" value="ECO:0000318"/>
    <property type="project" value="GO_Central"/>
</dbReference>
<dbReference type="GO" id="GO:0042748">
    <property type="term" value="P:circadian sleep/wake cycle, non-REM sleep"/>
    <property type="evidence" value="ECO:0007669"/>
    <property type="project" value="Ensembl"/>
</dbReference>
<dbReference type="GO" id="GO:0007616">
    <property type="term" value="P:long-term memory"/>
    <property type="evidence" value="ECO:0007669"/>
    <property type="project" value="Ensembl"/>
</dbReference>
<dbReference type="GO" id="GO:0050804">
    <property type="term" value="P:modulation of chemical synaptic transmission"/>
    <property type="evidence" value="ECO:0000318"/>
    <property type="project" value="GO_Central"/>
</dbReference>
<dbReference type="GO" id="GO:0060586">
    <property type="term" value="P:multicellular organismal-level iron ion homeostasis"/>
    <property type="evidence" value="ECO:0007669"/>
    <property type="project" value="Ensembl"/>
</dbReference>
<dbReference type="GO" id="GO:1900242">
    <property type="term" value="P:regulation of synaptic vesicle endocytosis"/>
    <property type="evidence" value="ECO:0007669"/>
    <property type="project" value="Ensembl"/>
</dbReference>
<dbReference type="GO" id="GO:0050951">
    <property type="term" value="P:sensory perception of temperature stimulus"/>
    <property type="evidence" value="ECO:0007669"/>
    <property type="project" value="Ensembl"/>
</dbReference>
<dbReference type="GO" id="GO:0042428">
    <property type="term" value="P:serotonin metabolic process"/>
    <property type="evidence" value="ECO:0007669"/>
    <property type="project" value="Ensembl"/>
</dbReference>
<dbReference type="CDD" id="cd14822">
    <property type="entry name" value="BACK_BTBD9"/>
    <property type="match status" value="1"/>
</dbReference>
<dbReference type="CDD" id="cd18287">
    <property type="entry name" value="BTB_POZ_BTBD9"/>
    <property type="match status" value="1"/>
</dbReference>
<dbReference type="FunFam" id="1.25.40.420:FF:000005">
    <property type="entry name" value="BTB/POZ domain-containing protein 9"/>
    <property type="match status" value="1"/>
</dbReference>
<dbReference type="FunFam" id="2.60.120.260:FF:000038">
    <property type="entry name" value="BTB/POZ domain-containing protein 9"/>
    <property type="match status" value="1"/>
</dbReference>
<dbReference type="FunFam" id="2.60.120.260:FF:000051">
    <property type="entry name" value="BTB/POZ domain-containing protein 9"/>
    <property type="match status" value="1"/>
</dbReference>
<dbReference type="FunFam" id="3.30.710.10:FF:000042">
    <property type="entry name" value="BTB/POZ domain-containing protein 9"/>
    <property type="match status" value="1"/>
</dbReference>
<dbReference type="Gene3D" id="1.25.40.420">
    <property type="match status" value="1"/>
</dbReference>
<dbReference type="Gene3D" id="2.60.120.260">
    <property type="entry name" value="Galactose-binding domain-like"/>
    <property type="match status" value="2"/>
</dbReference>
<dbReference type="Gene3D" id="3.30.710.10">
    <property type="entry name" value="Potassium Channel Kv1.1, Chain A"/>
    <property type="match status" value="1"/>
</dbReference>
<dbReference type="InterPro" id="IPR011705">
    <property type="entry name" value="BACK"/>
</dbReference>
<dbReference type="InterPro" id="IPR000210">
    <property type="entry name" value="BTB/POZ_dom"/>
</dbReference>
<dbReference type="InterPro" id="IPR052407">
    <property type="entry name" value="BTB_POZ_domain_cont_9"/>
</dbReference>
<dbReference type="InterPro" id="IPR034091">
    <property type="entry name" value="BTBD9_BACK-like_dom"/>
</dbReference>
<dbReference type="InterPro" id="IPR000421">
    <property type="entry name" value="FA58C"/>
</dbReference>
<dbReference type="InterPro" id="IPR008979">
    <property type="entry name" value="Galactose-bd-like_sf"/>
</dbReference>
<dbReference type="InterPro" id="IPR011333">
    <property type="entry name" value="SKP1/BTB/POZ_sf"/>
</dbReference>
<dbReference type="PANTHER" id="PTHR46306">
    <property type="entry name" value="BTB/POZ DOMAIN-CONTAINING PROTEIN 9"/>
    <property type="match status" value="1"/>
</dbReference>
<dbReference type="PANTHER" id="PTHR46306:SF1">
    <property type="entry name" value="BTB_POZ DOMAIN-CONTAINING PROTEIN 9"/>
    <property type="match status" value="1"/>
</dbReference>
<dbReference type="Pfam" id="PF07707">
    <property type="entry name" value="BACK"/>
    <property type="match status" value="1"/>
</dbReference>
<dbReference type="Pfam" id="PF00651">
    <property type="entry name" value="BTB"/>
    <property type="match status" value="1"/>
</dbReference>
<dbReference type="Pfam" id="PF00754">
    <property type="entry name" value="F5_F8_type_C"/>
    <property type="match status" value="2"/>
</dbReference>
<dbReference type="SMART" id="SM00875">
    <property type="entry name" value="BACK"/>
    <property type="match status" value="1"/>
</dbReference>
<dbReference type="SMART" id="SM00225">
    <property type="entry name" value="BTB"/>
    <property type="match status" value="1"/>
</dbReference>
<dbReference type="SUPFAM" id="SSF49785">
    <property type="entry name" value="Galactose-binding domain-like"/>
    <property type="match status" value="2"/>
</dbReference>
<dbReference type="SUPFAM" id="SSF54695">
    <property type="entry name" value="POZ domain"/>
    <property type="match status" value="1"/>
</dbReference>
<dbReference type="PROSITE" id="PS50097">
    <property type="entry name" value="BTB"/>
    <property type="match status" value="1"/>
</dbReference>
<feature type="chain" id="PRO_0000186217" description="BTB/POZ domain-containing protein 9">
    <location>
        <begin position="1"/>
        <end position="612"/>
    </location>
</feature>
<feature type="domain" description="BTB" evidence="1">
    <location>
        <begin position="36"/>
        <end position="104"/>
    </location>
</feature>
<feature type="domain" description="BACK">
    <location>
        <begin position="142"/>
        <end position="240"/>
    </location>
</feature>
<feature type="region of interest" description="Disordered" evidence="2">
    <location>
        <begin position="560"/>
        <end position="612"/>
    </location>
</feature>
<feature type="compositionally biased region" description="Polar residues" evidence="2">
    <location>
        <begin position="573"/>
        <end position="584"/>
    </location>
</feature>
<feature type="compositionally biased region" description="Low complexity" evidence="2">
    <location>
        <begin position="588"/>
        <end position="612"/>
    </location>
</feature>
<feature type="splice variant" id="VSP_044247" description="In isoform 3." evidence="7">
    <location>
        <begin position="1"/>
        <end position="68"/>
    </location>
</feature>
<feature type="splice variant" id="VSP_042543" description="In isoform 2." evidence="7">
    <original>MSNSHPLRPFTAVGEIDHVHILSEHIGALLIGEEYGDVTFVVEKKRFPAHRVILAARCQYF</original>
    <variation>MC</variation>
    <location>
        <begin position="1"/>
        <end position="61"/>
    </location>
</feature>
<feature type="splice variant" id="VSP_042544" description="In isoform 2." evidence="7">
    <original>V</original>
    <variation>VCSGDGVSLWCPLWSRTPELKQSSLLGLPK</variation>
    <location>
        <position position="383"/>
    </location>
</feature>
<feature type="sequence conflict" description="In Ref. 5; BAB71514." evidence="8" ref="5">
    <original>I</original>
    <variation>V</variation>
    <location>
        <position position="331"/>
    </location>
</feature>
<evidence type="ECO:0000255" key="1">
    <source>
        <dbReference type="PROSITE-ProRule" id="PRU00037"/>
    </source>
</evidence>
<evidence type="ECO:0000256" key="2">
    <source>
        <dbReference type="SAM" id="MobiDB-lite"/>
    </source>
</evidence>
<evidence type="ECO:0000269" key="3">
    <source>
    </source>
</evidence>
<evidence type="ECO:0000269" key="4">
    <source>
    </source>
</evidence>
<evidence type="ECO:0000269" key="5">
    <source>
    </source>
</evidence>
<evidence type="ECO:0000269" key="6">
    <source>
    </source>
</evidence>
<evidence type="ECO:0000303" key="7">
    <source>
    </source>
</evidence>
<evidence type="ECO:0000305" key="8"/>
<protein>
    <recommendedName>
        <fullName>BTB/POZ domain-containing protein 9</fullName>
    </recommendedName>
</protein>
<sequence>MSNSHPLRPFTAVGEIDHVHILSEHIGALLIGEEYGDVTFVVEKKRFPAHRVILAARCQYFRALLYGGMRESQPEAEIPLQDTTAEAFTMLLKYIYTGRATLTDEKEEVLLDFLSLAHKYGFPELEDSTSEYLCTILNIQNVCMTFDVASLYSLPKLTCMCCMFMDRNAQEVLSSEGFLSLSKTALLNIVLRDSFAAPEKDIFLALLNWCKHNSKENHAEIMQAVRLPLMSLTELLNVVRPSGLLSPDAILDAIKVRSESRDMDLNYRGMLIPEENIATMKYGAQVVKGELKSALLDGDTQNYDLDHGFSRHPIDDDCRSGIEIKLGQPSIINHIRILLWDRDSRSYSYFIEVSMDELDWVRVIDHSQYLCRSWQKLYFPARVCRYIRIVGTHNTVNKIFHIVAFECMFTNKTFTLEKGLIVPMENVATIADCASVIEGVSRSRNALLNGDTKNYDWDSGYTCHQLGSGAIVVQLAQPYMIGSIRLLLWDCDDRSYSYYVEVSTNQQQWTMVADRTKVSCKSWQSVTFERQPASFIRIVGTHNTANEVFHCVHFECPEQQSSQKEENSEESGTGDTSLAGQQLDSHALRAPSGSSLPSSPGSNSRSPNRQHQ</sequence>
<accession>Q96Q07</accession>
<accession>Q494V9</accession>
<accession>Q494W1</accession>
<accession>Q96M00</accession>
<keyword id="KW-0025">Alternative splicing</keyword>
<keyword id="KW-1267">Proteomics identification</keyword>
<keyword id="KW-1185">Reference proteome</keyword>
<comment type="interaction">
    <interactant intactId="EBI-22006737">
        <id>Q96Q07-2</id>
    </interactant>
    <interactant intactId="EBI-718729">
        <id>P55212</id>
        <label>CASP6</label>
    </interactant>
    <organismsDiffer>false</organismsDiffer>
    <experiments>3</experiments>
</comment>
<comment type="interaction">
    <interactant intactId="EBI-22006737">
        <id>Q96Q07-2</id>
    </interactant>
    <interactant intactId="EBI-21591415">
        <id>P13473-2</id>
        <label>LAMP2</label>
    </interactant>
    <organismsDiffer>false</organismsDiffer>
    <experiments>3</experiments>
</comment>
<comment type="interaction">
    <interactant intactId="EBI-22006737">
        <id>Q96Q07-2</id>
    </interactant>
    <interactant intactId="EBI-286642">
        <id>P62826</id>
        <label>RAN</label>
    </interactant>
    <organismsDiffer>false</organismsDiffer>
    <experiments>3</experiments>
</comment>
<comment type="alternative products">
    <event type="alternative splicing"/>
    <isoform>
        <id>Q96Q07-1</id>
        <name>1</name>
        <sequence type="displayed"/>
    </isoform>
    <isoform>
        <id>Q96Q07-2</id>
        <name>2</name>
        <sequence type="described" ref="VSP_042543 VSP_042544"/>
    </isoform>
    <isoform>
        <id>Q96Q07-3</id>
        <name>3</name>
        <sequence type="described" ref="VSP_044247"/>
    </isoform>
</comment>
<comment type="tissue specificity">
    <text evidence="3 6">Detected in the brain (at protein level) (PubMed:22658601). Moderately expressed in all specific brain regions examined (PubMed:11572484). Expressed in the dopaminergic neurons of the substantia nigra and A11 neurons (PubMed:22658601). Highly expressed in kidney and moderately expressed in all other adult and fetal tissues (PubMed:11572484).</text>
</comment>
<comment type="disease" evidence="4 5">
    <disease id="DI-02843">
        <name>Restless legs syndrome 6</name>
        <acronym>RLS6</acronym>
        <description>A neurologic sleep/wake disorder characterized by uncomfortable and unpleasant sensations in the legs that appear at rest, usually at night, inducing an irresistible desire to move the legs. The disorder results in nocturnal insomnia and chronic sleep deprivation. The majority of patients also have periodic limb movements in sleep, which are characterized by involuntary, highly stereotypical, regularly occurring limb movements that occur during sleep.</description>
        <dbReference type="MIM" id="611185"/>
    </disease>
    <text>Disease susceptibility may be associated with variants affecting the gene represented in this entry.</text>
</comment>
<comment type="sequence caution" evidence="8">
    <conflict type="erroneous initiation">
        <sequence resource="EMBL-CDS" id="BAB67773"/>
    </conflict>
    <text>Extended N-terminus.</text>
</comment>